<feature type="propeptide" id="PRO_0000276170" evidence="1">
    <location>
        <begin position="1"/>
        <end position="24"/>
    </location>
</feature>
<feature type="chain" id="PRO_0000276171" description="Photosystem II reaction center protein K" evidence="1">
    <location>
        <begin position="25"/>
        <end position="61"/>
    </location>
</feature>
<feature type="transmembrane region" description="Helical" evidence="1">
    <location>
        <begin position="40"/>
        <end position="60"/>
    </location>
</feature>
<sequence>MLNILNLICICLNFALYSSSFFFTKLPEAYAFLNPIVDVMPVIPLFFFLLAFVWQAAVSFR</sequence>
<gene>
    <name evidence="1" type="primary">psbK</name>
</gene>
<name>PSBK_POPAL</name>
<accession>Q14FH4</accession>
<reference key="1">
    <citation type="submission" date="2005-03" db="EMBL/GenBank/DDBJ databases">
        <title>Complete structure of the chloroplast genome of Populus alba.</title>
        <authorList>
            <person name="Okumura S."/>
            <person name="Yamashita A."/>
            <person name="Kanamoto H."/>
            <person name="Hattori M."/>
            <person name="Takase H."/>
            <person name="Tomizawa K."/>
        </authorList>
    </citation>
    <scope>NUCLEOTIDE SEQUENCE [LARGE SCALE GENOMIC DNA]</scope>
</reference>
<protein>
    <recommendedName>
        <fullName evidence="1">Photosystem II reaction center protein K</fullName>
        <shortName evidence="1">PSII-K</shortName>
    </recommendedName>
</protein>
<geneLocation type="chloroplast"/>
<comment type="function">
    <text evidence="1">One of the components of the core complex of photosystem II (PSII). PSII is a light-driven water:plastoquinone oxidoreductase that uses light energy to abstract electrons from H(2)O, generating O(2) and a proton gradient subsequently used for ATP formation. It consists of a core antenna complex that captures photons, and an electron transfer chain that converts photonic excitation into a charge separation.</text>
</comment>
<comment type="subunit">
    <text evidence="1">PSII is composed of 1 copy each of membrane proteins PsbA, PsbB, PsbC, PsbD, PsbE, PsbF, PsbH, PsbI, PsbJ, PsbK, PsbL, PsbM, PsbT, PsbX, PsbY, PsbZ, Psb30/Ycf12, at least 3 peripheral proteins of the oxygen-evolving complex and a large number of cofactors. It forms dimeric complexes.</text>
</comment>
<comment type="subcellular location">
    <subcellularLocation>
        <location evidence="1">Plastid</location>
        <location evidence="1">Chloroplast thylakoid membrane</location>
        <topology evidence="1">Single-pass membrane protein</topology>
    </subcellularLocation>
</comment>
<comment type="similarity">
    <text evidence="1">Belongs to the PsbK family.</text>
</comment>
<organism>
    <name type="scientific">Populus alba</name>
    <name type="common">White poplar</name>
    <dbReference type="NCBI Taxonomy" id="43335"/>
    <lineage>
        <taxon>Eukaryota</taxon>
        <taxon>Viridiplantae</taxon>
        <taxon>Streptophyta</taxon>
        <taxon>Embryophyta</taxon>
        <taxon>Tracheophyta</taxon>
        <taxon>Spermatophyta</taxon>
        <taxon>Magnoliopsida</taxon>
        <taxon>eudicotyledons</taxon>
        <taxon>Gunneridae</taxon>
        <taxon>Pentapetalae</taxon>
        <taxon>rosids</taxon>
        <taxon>fabids</taxon>
        <taxon>Malpighiales</taxon>
        <taxon>Salicaceae</taxon>
        <taxon>Saliceae</taxon>
        <taxon>Populus</taxon>
    </lineage>
</organism>
<proteinExistence type="inferred from homology"/>
<evidence type="ECO:0000255" key="1">
    <source>
        <dbReference type="HAMAP-Rule" id="MF_00441"/>
    </source>
</evidence>
<keyword id="KW-0150">Chloroplast</keyword>
<keyword id="KW-0472">Membrane</keyword>
<keyword id="KW-0602">Photosynthesis</keyword>
<keyword id="KW-0604">Photosystem II</keyword>
<keyword id="KW-0934">Plastid</keyword>
<keyword id="KW-0674">Reaction center</keyword>
<keyword id="KW-0793">Thylakoid</keyword>
<keyword id="KW-0812">Transmembrane</keyword>
<keyword id="KW-1133">Transmembrane helix</keyword>
<dbReference type="EMBL" id="AP008956">
    <property type="protein sequence ID" value="BAE97188.1"/>
    <property type="molecule type" value="Genomic_DNA"/>
</dbReference>
<dbReference type="RefSeq" id="YP_665541.1">
    <property type="nucleotide sequence ID" value="NC_008235.1"/>
</dbReference>
<dbReference type="SMR" id="Q14FH4"/>
<dbReference type="GeneID" id="4178167"/>
<dbReference type="KEGG" id="palz:4178167"/>
<dbReference type="OrthoDB" id="37877at3646"/>
<dbReference type="GO" id="GO:0009535">
    <property type="term" value="C:chloroplast thylakoid membrane"/>
    <property type="evidence" value="ECO:0007669"/>
    <property type="project" value="UniProtKB-SubCell"/>
</dbReference>
<dbReference type="GO" id="GO:0009539">
    <property type="term" value="C:photosystem II reaction center"/>
    <property type="evidence" value="ECO:0007669"/>
    <property type="project" value="InterPro"/>
</dbReference>
<dbReference type="GO" id="GO:0015979">
    <property type="term" value="P:photosynthesis"/>
    <property type="evidence" value="ECO:0007669"/>
    <property type="project" value="UniProtKB-UniRule"/>
</dbReference>
<dbReference type="HAMAP" id="MF_00441">
    <property type="entry name" value="PSII_PsbK"/>
    <property type="match status" value="1"/>
</dbReference>
<dbReference type="InterPro" id="IPR003687">
    <property type="entry name" value="PSII_PsbK"/>
</dbReference>
<dbReference type="InterPro" id="IPR037270">
    <property type="entry name" value="PSII_PsbK_sf"/>
</dbReference>
<dbReference type="NCBIfam" id="NF002715">
    <property type="entry name" value="PRK02553.1"/>
    <property type="match status" value="1"/>
</dbReference>
<dbReference type="PANTHER" id="PTHR35325">
    <property type="match status" value="1"/>
</dbReference>
<dbReference type="PANTHER" id="PTHR35325:SF1">
    <property type="entry name" value="PHOTOSYSTEM II REACTION CENTER PROTEIN K"/>
    <property type="match status" value="1"/>
</dbReference>
<dbReference type="Pfam" id="PF02533">
    <property type="entry name" value="PsbK"/>
    <property type="match status" value="1"/>
</dbReference>
<dbReference type="SUPFAM" id="SSF161037">
    <property type="entry name" value="Photosystem II reaction center protein K, PsbK"/>
    <property type="match status" value="1"/>
</dbReference>